<keyword id="KW-0687">Ribonucleoprotein</keyword>
<keyword id="KW-0689">Ribosomal protein</keyword>
<keyword id="KW-0694">RNA-binding</keyword>
<keyword id="KW-0699">rRNA-binding</keyword>
<proteinExistence type="inferred from homology"/>
<gene>
    <name evidence="1" type="primary">rpsS</name>
    <name type="ordered locus">VC0395_A2170</name>
    <name type="ordered locus">VC395_2705</name>
</gene>
<reference key="1">
    <citation type="submission" date="2007-03" db="EMBL/GenBank/DDBJ databases">
        <authorList>
            <person name="Heidelberg J."/>
        </authorList>
    </citation>
    <scope>NUCLEOTIDE SEQUENCE [LARGE SCALE GENOMIC DNA]</scope>
    <source>
        <strain>ATCC 39541 / Classical Ogawa 395 / O395</strain>
    </source>
</reference>
<reference key="2">
    <citation type="journal article" date="2008" name="PLoS ONE">
        <title>A recalibrated molecular clock and independent origins for the cholera pandemic clones.</title>
        <authorList>
            <person name="Feng L."/>
            <person name="Reeves P.R."/>
            <person name="Lan R."/>
            <person name="Ren Y."/>
            <person name="Gao C."/>
            <person name="Zhou Z."/>
            <person name="Ren Y."/>
            <person name="Cheng J."/>
            <person name="Wang W."/>
            <person name="Wang J."/>
            <person name="Qian W."/>
            <person name="Li D."/>
            <person name="Wang L."/>
        </authorList>
    </citation>
    <scope>NUCLEOTIDE SEQUENCE [LARGE SCALE GENOMIC DNA]</scope>
    <source>
        <strain>ATCC 39541 / Classical Ogawa 395 / O395</strain>
    </source>
</reference>
<feature type="chain" id="PRO_1000072514" description="Small ribosomal subunit protein uS19">
    <location>
        <begin position="1"/>
        <end position="92"/>
    </location>
</feature>
<organism>
    <name type="scientific">Vibrio cholerae serotype O1 (strain ATCC 39541 / Classical Ogawa 395 / O395)</name>
    <dbReference type="NCBI Taxonomy" id="345073"/>
    <lineage>
        <taxon>Bacteria</taxon>
        <taxon>Pseudomonadati</taxon>
        <taxon>Pseudomonadota</taxon>
        <taxon>Gammaproteobacteria</taxon>
        <taxon>Vibrionales</taxon>
        <taxon>Vibrionaceae</taxon>
        <taxon>Vibrio</taxon>
    </lineage>
</organism>
<name>RS19_VIBC3</name>
<sequence length="92" mass="10399">MPRSLKKGPFIDLHLLKKVEKAVESGDKKPIKTWSRRSMIIPTMIGLTIAVHNGRQHVPVFVTDEMIGHKLGEFAPTRTYRGHAADKKAKKK</sequence>
<protein>
    <recommendedName>
        <fullName evidence="1">Small ribosomal subunit protein uS19</fullName>
    </recommendedName>
    <alternativeName>
        <fullName evidence="2">30S ribosomal protein S19</fullName>
    </alternativeName>
</protein>
<comment type="function">
    <text evidence="1">Protein S19 forms a complex with S13 that binds strongly to the 16S ribosomal RNA.</text>
</comment>
<comment type="similarity">
    <text evidence="1">Belongs to the universal ribosomal protein uS19 family.</text>
</comment>
<evidence type="ECO:0000255" key="1">
    <source>
        <dbReference type="HAMAP-Rule" id="MF_00531"/>
    </source>
</evidence>
<evidence type="ECO:0000305" key="2"/>
<dbReference type="EMBL" id="CP000627">
    <property type="protein sequence ID" value="ABQ19995.1"/>
    <property type="molecule type" value="Genomic_DNA"/>
</dbReference>
<dbReference type="EMBL" id="CP001235">
    <property type="protein sequence ID" value="ACP10691.1"/>
    <property type="molecule type" value="Genomic_DNA"/>
</dbReference>
<dbReference type="RefSeq" id="WP_001138114.1">
    <property type="nucleotide sequence ID" value="NZ_JAACZH010000007.1"/>
</dbReference>
<dbReference type="SMR" id="A5F545"/>
<dbReference type="GeneID" id="94012756"/>
<dbReference type="KEGG" id="vco:VC0395_A2170"/>
<dbReference type="KEGG" id="vcr:VC395_2705"/>
<dbReference type="PATRIC" id="fig|345073.21.peg.2605"/>
<dbReference type="eggNOG" id="COG0185">
    <property type="taxonomic scope" value="Bacteria"/>
</dbReference>
<dbReference type="HOGENOM" id="CLU_144911_0_1_6"/>
<dbReference type="OrthoDB" id="9797833at2"/>
<dbReference type="Proteomes" id="UP000000249">
    <property type="component" value="Chromosome 2"/>
</dbReference>
<dbReference type="GO" id="GO:0005737">
    <property type="term" value="C:cytoplasm"/>
    <property type="evidence" value="ECO:0007669"/>
    <property type="project" value="UniProtKB-ARBA"/>
</dbReference>
<dbReference type="GO" id="GO:0015935">
    <property type="term" value="C:small ribosomal subunit"/>
    <property type="evidence" value="ECO:0007669"/>
    <property type="project" value="InterPro"/>
</dbReference>
<dbReference type="GO" id="GO:0019843">
    <property type="term" value="F:rRNA binding"/>
    <property type="evidence" value="ECO:0007669"/>
    <property type="project" value="UniProtKB-UniRule"/>
</dbReference>
<dbReference type="GO" id="GO:0003735">
    <property type="term" value="F:structural constituent of ribosome"/>
    <property type="evidence" value="ECO:0007669"/>
    <property type="project" value="InterPro"/>
</dbReference>
<dbReference type="GO" id="GO:0000028">
    <property type="term" value="P:ribosomal small subunit assembly"/>
    <property type="evidence" value="ECO:0007669"/>
    <property type="project" value="TreeGrafter"/>
</dbReference>
<dbReference type="GO" id="GO:0006412">
    <property type="term" value="P:translation"/>
    <property type="evidence" value="ECO:0007669"/>
    <property type="project" value="UniProtKB-UniRule"/>
</dbReference>
<dbReference type="FunFam" id="3.30.860.10:FF:000001">
    <property type="entry name" value="30S ribosomal protein S19"/>
    <property type="match status" value="1"/>
</dbReference>
<dbReference type="Gene3D" id="3.30.860.10">
    <property type="entry name" value="30s Ribosomal Protein S19, Chain A"/>
    <property type="match status" value="1"/>
</dbReference>
<dbReference type="HAMAP" id="MF_00531">
    <property type="entry name" value="Ribosomal_uS19"/>
    <property type="match status" value="1"/>
</dbReference>
<dbReference type="InterPro" id="IPR002222">
    <property type="entry name" value="Ribosomal_uS19"/>
</dbReference>
<dbReference type="InterPro" id="IPR005732">
    <property type="entry name" value="Ribosomal_uS19_bac-type"/>
</dbReference>
<dbReference type="InterPro" id="IPR020934">
    <property type="entry name" value="Ribosomal_uS19_CS"/>
</dbReference>
<dbReference type="InterPro" id="IPR023575">
    <property type="entry name" value="Ribosomal_uS19_SF"/>
</dbReference>
<dbReference type="NCBIfam" id="TIGR01050">
    <property type="entry name" value="rpsS_bact"/>
    <property type="match status" value="1"/>
</dbReference>
<dbReference type="PANTHER" id="PTHR11880">
    <property type="entry name" value="RIBOSOMAL PROTEIN S19P FAMILY MEMBER"/>
    <property type="match status" value="1"/>
</dbReference>
<dbReference type="PANTHER" id="PTHR11880:SF8">
    <property type="entry name" value="SMALL RIBOSOMAL SUBUNIT PROTEIN US19M"/>
    <property type="match status" value="1"/>
</dbReference>
<dbReference type="Pfam" id="PF00203">
    <property type="entry name" value="Ribosomal_S19"/>
    <property type="match status" value="1"/>
</dbReference>
<dbReference type="PIRSF" id="PIRSF002144">
    <property type="entry name" value="Ribosomal_S19"/>
    <property type="match status" value="1"/>
</dbReference>
<dbReference type="PRINTS" id="PR00975">
    <property type="entry name" value="RIBOSOMALS19"/>
</dbReference>
<dbReference type="SUPFAM" id="SSF54570">
    <property type="entry name" value="Ribosomal protein S19"/>
    <property type="match status" value="1"/>
</dbReference>
<dbReference type="PROSITE" id="PS00323">
    <property type="entry name" value="RIBOSOMAL_S19"/>
    <property type="match status" value="1"/>
</dbReference>
<accession>A5F545</accession>
<accession>C3LXJ1</accession>